<accession>Q54DT8</accession>
<reference key="1">
    <citation type="journal article" date="2005" name="Nature">
        <title>The genome of the social amoeba Dictyostelium discoideum.</title>
        <authorList>
            <person name="Eichinger L."/>
            <person name="Pachebat J.A."/>
            <person name="Gloeckner G."/>
            <person name="Rajandream M.A."/>
            <person name="Sucgang R."/>
            <person name="Berriman M."/>
            <person name="Song J."/>
            <person name="Olsen R."/>
            <person name="Szafranski K."/>
            <person name="Xu Q."/>
            <person name="Tunggal B."/>
            <person name="Kummerfeld S."/>
            <person name="Madera M."/>
            <person name="Konfortov B.A."/>
            <person name="Rivero F."/>
            <person name="Bankier A.T."/>
            <person name="Lehmann R."/>
            <person name="Hamlin N."/>
            <person name="Davies R."/>
            <person name="Gaudet P."/>
            <person name="Fey P."/>
            <person name="Pilcher K."/>
            <person name="Chen G."/>
            <person name="Saunders D."/>
            <person name="Sodergren E.J."/>
            <person name="Davis P."/>
            <person name="Kerhornou A."/>
            <person name="Nie X."/>
            <person name="Hall N."/>
            <person name="Anjard C."/>
            <person name="Hemphill L."/>
            <person name="Bason N."/>
            <person name="Farbrother P."/>
            <person name="Desany B."/>
            <person name="Just E."/>
            <person name="Morio T."/>
            <person name="Rost R."/>
            <person name="Churcher C.M."/>
            <person name="Cooper J."/>
            <person name="Haydock S."/>
            <person name="van Driessche N."/>
            <person name="Cronin A."/>
            <person name="Goodhead I."/>
            <person name="Muzny D.M."/>
            <person name="Mourier T."/>
            <person name="Pain A."/>
            <person name="Lu M."/>
            <person name="Harper D."/>
            <person name="Lindsay R."/>
            <person name="Hauser H."/>
            <person name="James K.D."/>
            <person name="Quiles M."/>
            <person name="Madan Babu M."/>
            <person name="Saito T."/>
            <person name="Buchrieser C."/>
            <person name="Wardroper A."/>
            <person name="Felder M."/>
            <person name="Thangavelu M."/>
            <person name="Johnson D."/>
            <person name="Knights A."/>
            <person name="Loulseged H."/>
            <person name="Mungall K.L."/>
            <person name="Oliver K."/>
            <person name="Price C."/>
            <person name="Quail M.A."/>
            <person name="Urushihara H."/>
            <person name="Hernandez J."/>
            <person name="Rabbinowitsch E."/>
            <person name="Steffen D."/>
            <person name="Sanders M."/>
            <person name="Ma J."/>
            <person name="Kohara Y."/>
            <person name="Sharp S."/>
            <person name="Simmonds M.N."/>
            <person name="Spiegler S."/>
            <person name="Tivey A."/>
            <person name="Sugano S."/>
            <person name="White B."/>
            <person name="Walker D."/>
            <person name="Woodward J.R."/>
            <person name="Winckler T."/>
            <person name="Tanaka Y."/>
            <person name="Shaulsky G."/>
            <person name="Schleicher M."/>
            <person name="Weinstock G.M."/>
            <person name="Rosenthal A."/>
            <person name="Cox E.C."/>
            <person name="Chisholm R.L."/>
            <person name="Gibbs R.A."/>
            <person name="Loomis W.F."/>
            <person name="Platzer M."/>
            <person name="Kay R.R."/>
            <person name="Williams J.G."/>
            <person name="Dear P.H."/>
            <person name="Noegel A.A."/>
            <person name="Barrell B.G."/>
            <person name="Kuspa A."/>
        </authorList>
    </citation>
    <scope>NUCLEOTIDE SEQUENCE [LARGE SCALE GENOMIC DNA]</scope>
    <source>
        <strain>AX4</strain>
    </source>
</reference>
<proteinExistence type="inferred from homology"/>
<name>PPOX_DICDI</name>
<evidence type="ECO:0000250" key="1">
    <source>
        <dbReference type="UniProtKB" id="P50336"/>
    </source>
</evidence>
<evidence type="ECO:0000250" key="2">
    <source>
        <dbReference type="UniProtKB" id="P51175"/>
    </source>
</evidence>
<evidence type="ECO:0000305" key="3"/>
<protein>
    <recommendedName>
        <fullName>Protoporphyrinogen oxidase</fullName>
        <shortName>PPO</shortName>
        <ecNumber evidence="1">1.3.3.4</ecNumber>
    </recommendedName>
</protein>
<gene>
    <name type="primary">ppox</name>
    <name type="synonym">hemG</name>
    <name type="ORF">DDB_G0292040</name>
</gene>
<keyword id="KW-0274">FAD</keyword>
<keyword id="KW-0285">Flavoprotein</keyword>
<keyword id="KW-0350">Heme biosynthesis</keyword>
<keyword id="KW-0496">Mitochondrion</keyword>
<keyword id="KW-0560">Oxidoreductase</keyword>
<keyword id="KW-0627">Porphyrin biosynthesis</keyword>
<keyword id="KW-1185">Reference proteome</keyword>
<organism>
    <name type="scientific">Dictyostelium discoideum</name>
    <name type="common">Social amoeba</name>
    <dbReference type="NCBI Taxonomy" id="44689"/>
    <lineage>
        <taxon>Eukaryota</taxon>
        <taxon>Amoebozoa</taxon>
        <taxon>Evosea</taxon>
        <taxon>Eumycetozoa</taxon>
        <taxon>Dictyostelia</taxon>
        <taxon>Dictyosteliales</taxon>
        <taxon>Dictyosteliaceae</taxon>
        <taxon>Dictyostelium</taxon>
    </lineage>
</organism>
<comment type="function">
    <text evidence="1">Catalyzes the 6-electron oxidation of protoporphyrinogen-IX to form protoporphyrin-IX.</text>
</comment>
<comment type="catalytic activity">
    <reaction evidence="1">
        <text>protoporphyrinogen IX + 3 O2 = protoporphyrin IX + 3 H2O2</text>
        <dbReference type="Rhea" id="RHEA:25576"/>
        <dbReference type="ChEBI" id="CHEBI:15379"/>
        <dbReference type="ChEBI" id="CHEBI:16240"/>
        <dbReference type="ChEBI" id="CHEBI:57306"/>
        <dbReference type="ChEBI" id="CHEBI:57307"/>
        <dbReference type="EC" id="1.3.3.4"/>
    </reaction>
</comment>
<comment type="cofactor">
    <cofactor evidence="1">
        <name>FAD</name>
        <dbReference type="ChEBI" id="CHEBI:57692"/>
    </cofactor>
    <text evidence="1">Binds 1 FAD per subunit.</text>
</comment>
<comment type="pathway">
    <text>Porphyrin-containing compound metabolism; protoporphyrin-IX biosynthesis; protoporphyrin-IX from protoporphyrinogen-IX: step 1/1.</text>
</comment>
<comment type="subcellular location">
    <subcellularLocation>
        <location evidence="2">Mitochondrion</location>
    </subcellularLocation>
</comment>
<comment type="similarity">
    <text evidence="3">Belongs to the protoporphyrinogen/coproporphyrinogen oxidase family. Protoporphyrinogen oxidase subfamily.</text>
</comment>
<sequence>MIQKVGIIGSGISGLSSYYYLRNGINLTSKFSKNNLKINIFEKSNKVGGNIQTRIIQGKNKDEKIIVEEGPRSLRALGRGLNTLEFIKRLGISNDIIFSSANSNGKFVLLDGKPKEIPMTSLFDIIKFSFKHSIVSSILKEPFKKVPSQVKEMDPNWDESVHDFFSRRLGKTMTKTFIEPTILGIYGGDYTNLSIKSTFKRAALLEPFGGLILGSLFKSKKQKQFELDLDKNEKRLLPSKNELTELFDKDTDKTNVFSFKENGLSRMIQKLKSLIESDSLTKLYLSTSIVEIEKDVTNGTLKVTDNKGNQYQYDQLISTIPLNQLAPMFKKSDSKLYQLLQSVNYTSIAVINLIYKSNKNVVKIISDKGFGYLVPSKENQSVIGVCFDSNTFPEFVNNNNNNNNDNDNGNEKDQSIITVMIGGNNGIKDRNDNWIDVTNTSKDKLLDIALKHLDKVLDIESSPDFTNVSIYDNGIPHYNIGHQNLINEIQNHITKNYGTTLLLGGNSIDGVGINDSIHKSKQLINSLKLSNN</sequence>
<feature type="chain" id="PRO_0000327793" description="Protoporphyrinogen oxidase">
    <location>
        <begin position="1"/>
        <end position="532"/>
    </location>
</feature>
<feature type="binding site" evidence="1">
    <location>
        <begin position="9"/>
        <end position="14"/>
    </location>
    <ligand>
        <name>FAD</name>
        <dbReference type="ChEBI" id="CHEBI:57692"/>
    </ligand>
</feature>
<feature type="binding site" evidence="1">
    <location>
        <position position="289"/>
    </location>
    <ligand>
        <name>FAD</name>
        <dbReference type="ChEBI" id="CHEBI:57692"/>
    </ligand>
</feature>
<feature type="binding site" evidence="1">
    <location>
        <begin position="511"/>
        <end position="513"/>
    </location>
    <ligand>
        <name>FAD</name>
        <dbReference type="ChEBI" id="CHEBI:57692"/>
    </ligand>
</feature>
<dbReference type="EC" id="1.3.3.4" evidence="1"/>
<dbReference type="EMBL" id="AAFI02000187">
    <property type="protein sequence ID" value="EAL61376.1"/>
    <property type="molecule type" value="Genomic_DNA"/>
</dbReference>
<dbReference type="RefSeq" id="XP_629784.1">
    <property type="nucleotide sequence ID" value="XM_629782.1"/>
</dbReference>
<dbReference type="SMR" id="Q54DT8"/>
<dbReference type="FunCoup" id="Q54DT8">
    <property type="interactions" value="111"/>
</dbReference>
<dbReference type="STRING" id="44689.Q54DT8"/>
<dbReference type="PaxDb" id="44689-DDB0231419"/>
<dbReference type="EnsemblProtists" id="EAL61376">
    <property type="protein sequence ID" value="EAL61376"/>
    <property type="gene ID" value="DDB_G0292040"/>
</dbReference>
<dbReference type="GeneID" id="8628461"/>
<dbReference type="KEGG" id="ddi:DDB_G0292040"/>
<dbReference type="dictyBase" id="DDB_G0292040">
    <property type="gene designation" value="hemG"/>
</dbReference>
<dbReference type="VEuPathDB" id="AmoebaDB:DDB_G0292040"/>
<dbReference type="eggNOG" id="KOG1276">
    <property type="taxonomic scope" value="Eukaryota"/>
</dbReference>
<dbReference type="HOGENOM" id="CLU_009629_1_0_1"/>
<dbReference type="InParanoid" id="Q54DT8"/>
<dbReference type="OMA" id="EHNQAVQ"/>
<dbReference type="PhylomeDB" id="Q54DT8"/>
<dbReference type="Reactome" id="R-DDI-189451">
    <property type="pathway name" value="Heme biosynthesis"/>
</dbReference>
<dbReference type="UniPathway" id="UPA00251">
    <property type="reaction ID" value="UER00324"/>
</dbReference>
<dbReference type="PRO" id="PR:Q54DT8"/>
<dbReference type="Proteomes" id="UP000002195">
    <property type="component" value="Chromosome 6"/>
</dbReference>
<dbReference type="GO" id="GO:0005743">
    <property type="term" value="C:mitochondrial inner membrane"/>
    <property type="evidence" value="ECO:0000318"/>
    <property type="project" value="GO_Central"/>
</dbReference>
<dbReference type="GO" id="GO:0004729">
    <property type="term" value="F:oxygen-dependent protoporphyrinogen oxidase activity"/>
    <property type="evidence" value="ECO:0000250"/>
    <property type="project" value="dictyBase"/>
</dbReference>
<dbReference type="GO" id="GO:0048870">
    <property type="term" value="P:cell motility"/>
    <property type="evidence" value="ECO:0000316"/>
    <property type="project" value="dictyBase"/>
</dbReference>
<dbReference type="GO" id="GO:0006783">
    <property type="term" value="P:heme biosynthetic process"/>
    <property type="evidence" value="ECO:0000250"/>
    <property type="project" value="dictyBase"/>
</dbReference>
<dbReference type="GO" id="GO:0006782">
    <property type="term" value="P:protoporphyrinogen IX biosynthetic process"/>
    <property type="evidence" value="ECO:0007669"/>
    <property type="project" value="UniProtKB-UniPathway"/>
</dbReference>
<dbReference type="FunFam" id="3.50.50.60:FF:000276">
    <property type="entry name" value="Protoporphyrinogen oxidase"/>
    <property type="match status" value="1"/>
</dbReference>
<dbReference type="Gene3D" id="3.50.50.60">
    <property type="entry name" value="FAD/NAD(P)-binding domain"/>
    <property type="match status" value="1"/>
</dbReference>
<dbReference type="InterPro" id="IPR002937">
    <property type="entry name" value="Amino_oxidase"/>
</dbReference>
<dbReference type="InterPro" id="IPR036188">
    <property type="entry name" value="FAD/NAD-bd_sf"/>
</dbReference>
<dbReference type="InterPro" id="IPR004572">
    <property type="entry name" value="Protoporphyrinogen_oxidase"/>
</dbReference>
<dbReference type="InterPro" id="IPR050464">
    <property type="entry name" value="Zeta_carotene_desat/Oxidored"/>
</dbReference>
<dbReference type="NCBIfam" id="TIGR00562">
    <property type="entry name" value="proto_IX_ox"/>
    <property type="match status" value="1"/>
</dbReference>
<dbReference type="PANTHER" id="PTHR42923">
    <property type="entry name" value="PROTOPORPHYRINOGEN OXIDASE"/>
    <property type="match status" value="1"/>
</dbReference>
<dbReference type="PANTHER" id="PTHR42923:SF3">
    <property type="entry name" value="PROTOPORPHYRINOGEN OXIDASE"/>
    <property type="match status" value="1"/>
</dbReference>
<dbReference type="Pfam" id="PF01593">
    <property type="entry name" value="Amino_oxidase"/>
    <property type="match status" value="1"/>
</dbReference>
<dbReference type="SUPFAM" id="SSF54373">
    <property type="entry name" value="FAD-linked reductases, C-terminal domain"/>
    <property type="match status" value="1"/>
</dbReference>
<dbReference type="SUPFAM" id="SSF51905">
    <property type="entry name" value="FAD/NAD(P)-binding domain"/>
    <property type="match status" value="1"/>
</dbReference>